<keyword id="KW-0963">Cytoplasm</keyword>
<keyword id="KW-1185">Reference proteome</keyword>
<keyword id="KW-0704">Schiff base</keyword>
<keyword id="KW-0784">Thiamine biosynthesis</keyword>
<keyword id="KW-0808">Transferase</keyword>
<organism>
    <name type="scientific">Nitrosomonas europaea (strain ATCC 19718 / CIP 103999 / KCTC 2705 / NBRC 14298)</name>
    <dbReference type="NCBI Taxonomy" id="228410"/>
    <lineage>
        <taxon>Bacteria</taxon>
        <taxon>Pseudomonadati</taxon>
        <taxon>Pseudomonadota</taxon>
        <taxon>Betaproteobacteria</taxon>
        <taxon>Nitrosomonadales</taxon>
        <taxon>Nitrosomonadaceae</taxon>
        <taxon>Nitrosomonas</taxon>
    </lineage>
</organism>
<sequence>MEPLVIAGKSYSSRLLLGTGKYRDFAETRAAVDASGAQIITVAIRRTNIGQNPDEPNLLDILPPSQFTLLPNTAGCYTAEDAVRTLRLARELLDGHALVKLEVLGDQKTLFPDVVATIEAAKILVKEGFQVMVYTSDDPIVARQLEDIGCAAIMPLASLIGSGMGILNPWNLQIIIDKATVPVIVDAGVGTASDAAIAMELGCDGVLMNTAVASARNPILMASAMRKAVEAGREAYLAGRMPRKIYQASPSSPAEGMFTGTQHPAANS</sequence>
<protein>
    <recommendedName>
        <fullName evidence="1">Thiazole synthase</fullName>
        <ecNumber evidence="1">2.8.1.10</ecNumber>
    </recommendedName>
</protein>
<reference key="1">
    <citation type="journal article" date="2003" name="J. Bacteriol.">
        <title>Complete genome sequence of the ammonia-oxidizing bacterium and obligate chemolithoautotroph Nitrosomonas europaea.</title>
        <authorList>
            <person name="Chain P."/>
            <person name="Lamerdin J.E."/>
            <person name="Larimer F.W."/>
            <person name="Regala W."/>
            <person name="Lao V."/>
            <person name="Land M.L."/>
            <person name="Hauser L."/>
            <person name="Hooper A.B."/>
            <person name="Klotz M.G."/>
            <person name="Norton J."/>
            <person name="Sayavedra-Soto L.A."/>
            <person name="Arciero D.M."/>
            <person name="Hommes N.G."/>
            <person name="Whittaker M.M."/>
            <person name="Arp D.J."/>
        </authorList>
    </citation>
    <scope>NUCLEOTIDE SEQUENCE [LARGE SCALE GENOMIC DNA]</scope>
    <source>
        <strain>ATCC 19718 / CIP 103999 / KCTC 2705 / NBRC 14298</strain>
    </source>
</reference>
<gene>
    <name evidence="1" type="primary">thiG</name>
    <name type="ordered locus">NE0284</name>
</gene>
<comment type="function">
    <text evidence="1">Catalyzes the rearrangement of 1-deoxy-D-xylulose 5-phosphate (DXP) to produce the thiazole phosphate moiety of thiamine. Sulfur is provided by the thiocarboxylate moiety of the carrier protein ThiS. In vitro, sulfur can be provided by H(2)S.</text>
</comment>
<comment type="catalytic activity">
    <reaction evidence="1">
        <text>[ThiS sulfur-carrier protein]-C-terminal-Gly-aminoethanethioate + 2-iminoacetate + 1-deoxy-D-xylulose 5-phosphate = [ThiS sulfur-carrier protein]-C-terminal Gly-Gly + 2-[(2R,5Z)-2-carboxy-4-methylthiazol-5(2H)-ylidene]ethyl phosphate + 2 H2O + H(+)</text>
        <dbReference type="Rhea" id="RHEA:26297"/>
        <dbReference type="Rhea" id="RHEA-COMP:12909"/>
        <dbReference type="Rhea" id="RHEA-COMP:19908"/>
        <dbReference type="ChEBI" id="CHEBI:15377"/>
        <dbReference type="ChEBI" id="CHEBI:15378"/>
        <dbReference type="ChEBI" id="CHEBI:57792"/>
        <dbReference type="ChEBI" id="CHEBI:62899"/>
        <dbReference type="ChEBI" id="CHEBI:77846"/>
        <dbReference type="ChEBI" id="CHEBI:90778"/>
        <dbReference type="ChEBI" id="CHEBI:232372"/>
        <dbReference type="EC" id="2.8.1.10"/>
    </reaction>
</comment>
<comment type="pathway">
    <text evidence="1">Cofactor biosynthesis; thiamine diphosphate biosynthesis.</text>
</comment>
<comment type="subunit">
    <text evidence="1">Homotetramer. Forms heterodimers with either ThiH or ThiS.</text>
</comment>
<comment type="subcellular location">
    <subcellularLocation>
        <location evidence="1">Cytoplasm</location>
    </subcellularLocation>
</comment>
<comment type="similarity">
    <text evidence="1">Belongs to the ThiG family.</text>
</comment>
<evidence type="ECO:0000255" key="1">
    <source>
        <dbReference type="HAMAP-Rule" id="MF_00443"/>
    </source>
</evidence>
<evidence type="ECO:0000256" key="2">
    <source>
        <dbReference type="SAM" id="MobiDB-lite"/>
    </source>
</evidence>
<proteinExistence type="inferred from homology"/>
<feature type="chain" id="PRO_0000162836" description="Thiazole synthase">
    <location>
        <begin position="1"/>
        <end position="268"/>
    </location>
</feature>
<feature type="region of interest" description="Disordered" evidence="2">
    <location>
        <begin position="248"/>
        <end position="268"/>
    </location>
</feature>
<feature type="compositionally biased region" description="Polar residues" evidence="2">
    <location>
        <begin position="259"/>
        <end position="268"/>
    </location>
</feature>
<feature type="active site" description="Schiff-base intermediate with DXP" evidence="1">
    <location>
        <position position="100"/>
    </location>
</feature>
<feature type="binding site" evidence="1">
    <location>
        <position position="161"/>
    </location>
    <ligand>
        <name>1-deoxy-D-xylulose 5-phosphate</name>
        <dbReference type="ChEBI" id="CHEBI:57792"/>
    </ligand>
</feature>
<feature type="binding site" evidence="1">
    <location>
        <begin position="187"/>
        <end position="188"/>
    </location>
    <ligand>
        <name>1-deoxy-D-xylulose 5-phosphate</name>
        <dbReference type="ChEBI" id="CHEBI:57792"/>
    </ligand>
</feature>
<feature type="binding site" evidence="1">
    <location>
        <begin position="209"/>
        <end position="210"/>
    </location>
    <ligand>
        <name>1-deoxy-D-xylulose 5-phosphate</name>
        <dbReference type="ChEBI" id="CHEBI:57792"/>
    </ligand>
</feature>
<name>THIG_NITEU</name>
<dbReference type="EC" id="2.8.1.10" evidence="1"/>
<dbReference type="EMBL" id="AL954747">
    <property type="protein sequence ID" value="CAD84195.1"/>
    <property type="molecule type" value="Genomic_DNA"/>
</dbReference>
<dbReference type="RefSeq" id="WP_011110921.1">
    <property type="nucleotide sequence ID" value="NC_004757.1"/>
</dbReference>
<dbReference type="SMR" id="Q82XI7"/>
<dbReference type="STRING" id="228410.NE0284"/>
<dbReference type="GeneID" id="87103489"/>
<dbReference type="KEGG" id="neu:NE0284"/>
<dbReference type="eggNOG" id="COG2022">
    <property type="taxonomic scope" value="Bacteria"/>
</dbReference>
<dbReference type="HOGENOM" id="CLU_062233_1_1_4"/>
<dbReference type="OrthoDB" id="9805935at2"/>
<dbReference type="PhylomeDB" id="Q82XI7"/>
<dbReference type="UniPathway" id="UPA00060"/>
<dbReference type="Proteomes" id="UP000001416">
    <property type="component" value="Chromosome"/>
</dbReference>
<dbReference type="GO" id="GO:0005737">
    <property type="term" value="C:cytoplasm"/>
    <property type="evidence" value="ECO:0007669"/>
    <property type="project" value="UniProtKB-SubCell"/>
</dbReference>
<dbReference type="GO" id="GO:1990107">
    <property type="term" value="F:thiazole synthase activity"/>
    <property type="evidence" value="ECO:0007669"/>
    <property type="project" value="UniProtKB-EC"/>
</dbReference>
<dbReference type="GO" id="GO:0009229">
    <property type="term" value="P:thiamine diphosphate biosynthetic process"/>
    <property type="evidence" value="ECO:0007669"/>
    <property type="project" value="UniProtKB-UniRule"/>
</dbReference>
<dbReference type="CDD" id="cd04728">
    <property type="entry name" value="ThiG"/>
    <property type="match status" value="1"/>
</dbReference>
<dbReference type="Gene3D" id="3.20.20.70">
    <property type="entry name" value="Aldolase class I"/>
    <property type="match status" value="1"/>
</dbReference>
<dbReference type="HAMAP" id="MF_00443">
    <property type="entry name" value="ThiG"/>
    <property type="match status" value="1"/>
</dbReference>
<dbReference type="InterPro" id="IPR013785">
    <property type="entry name" value="Aldolase_TIM"/>
</dbReference>
<dbReference type="InterPro" id="IPR033983">
    <property type="entry name" value="Thiazole_synthase_ThiG"/>
</dbReference>
<dbReference type="InterPro" id="IPR008867">
    <property type="entry name" value="ThiG"/>
</dbReference>
<dbReference type="PANTHER" id="PTHR34266">
    <property type="entry name" value="THIAZOLE SYNTHASE"/>
    <property type="match status" value="1"/>
</dbReference>
<dbReference type="PANTHER" id="PTHR34266:SF2">
    <property type="entry name" value="THIAZOLE SYNTHASE"/>
    <property type="match status" value="1"/>
</dbReference>
<dbReference type="Pfam" id="PF05690">
    <property type="entry name" value="ThiG"/>
    <property type="match status" value="1"/>
</dbReference>
<dbReference type="SUPFAM" id="SSF110399">
    <property type="entry name" value="ThiG-like"/>
    <property type="match status" value="1"/>
</dbReference>
<accession>Q82XI7</accession>